<name>RF2_STAAS</name>
<evidence type="ECO:0000250" key="1"/>
<evidence type="ECO:0000255" key="2">
    <source>
        <dbReference type="HAMAP-Rule" id="MF_00094"/>
    </source>
</evidence>
<organism>
    <name type="scientific">Staphylococcus aureus (strain MSSA476)</name>
    <dbReference type="NCBI Taxonomy" id="282459"/>
    <lineage>
        <taxon>Bacteria</taxon>
        <taxon>Bacillati</taxon>
        <taxon>Bacillota</taxon>
        <taxon>Bacilli</taxon>
        <taxon>Bacillales</taxon>
        <taxon>Staphylococcaceae</taxon>
        <taxon>Staphylococcus</taxon>
    </lineage>
</organism>
<accession>Q6GB76</accession>
<sequence>MELSEIKRNIDKYNQDLTQIRGSLDLENKETNIQEYEEMMAEPNFWDNQTKAQDIIDKNNALKAIVNGYKTLQAEVDDMDATWDLLQEEFDEEMKEDLEQEVINFKAKVDEYELQLLLDGPHDANNAILELHPGAGGTESQDWANMLFRMYQRYCEKKGFKVETVDYLPGDEAGIKSVTLLIKGHNAYGYLKAEKGVHRLVRISPFDSSGRRHTSFASCDVIPDFNNDEIEIEINPDDITVDTFRASGAGGQHINKTESAIRITHHPSGIVVNNQNERSQIKNREAAMKMLKSKLYQLKLEEQAREMAEIRGEQKEIGWGSQIRSYVFHPYSMVKDHRTNEETGKVDAVMDGDIGPFIESYLRQTMSHD</sequence>
<keyword id="KW-0963">Cytoplasm</keyword>
<keyword id="KW-0488">Methylation</keyword>
<keyword id="KW-0648">Protein biosynthesis</keyword>
<keyword id="KW-0688">Ribosomal frameshifting</keyword>
<feature type="chain" id="PRO_0000166849" description="Peptide chain release factor 2">
    <location>
        <begin position="1"/>
        <end position="369"/>
    </location>
</feature>
<feature type="modified residue" description="N5-methylglutamine" evidence="2">
    <location>
        <position position="252"/>
    </location>
</feature>
<dbReference type="EMBL" id="BX571857">
    <property type="protein sequence ID" value="CAG42495.1"/>
    <property type="molecule type" value="Genomic_DNA"/>
</dbReference>
<dbReference type="SMR" id="Q6GB76"/>
<dbReference type="KEGG" id="sas:SAS0719"/>
<dbReference type="HOGENOM" id="CLU_221244_2_2_9"/>
<dbReference type="GO" id="GO:0005737">
    <property type="term" value="C:cytoplasm"/>
    <property type="evidence" value="ECO:0007669"/>
    <property type="project" value="UniProtKB-SubCell"/>
</dbReference>
<dbReference type="GO" id="GO:0016149">
    <property type="term" value="F:translation release factor activity, codon specific"/>
    <property type="evidence" value="ECO:0007669"/>
    <property type="project" value="UniProtKB-UniRule"/>
</dbReference>
<dbReference type="GO" id="GO:0075523">
    <property type="term" value="P:viral translational frameshifting"/>
    <property type="evidence" value="ECO:0007669"/>
    <property type="project" value="UniProtKB-KW"/>
</dbReference>
<dbReference type="FunFam" id="3.30.160.20:FF:000010">
    <property type="entry name" value="Peptide chain release factor 2"/>
    <property type="match status" value="1"/>
</dbReference>
<dbReference type="Gene3D" id="3.30.160.20">
    <property type="match status" value="1"/>
</dbReference>
<dbReference type="Gene3D" id="3.30.70.1660">
    <property type="match status" value="1"/>
</dbReference>
<dbReference type="Gene3D" id="1.20.58.410">
    <property type="entry name" value="Release factor"/>
    <property type="match status" value="1"/>
</dbReference>
<dbReference type="HAMAP" id="MF_00094">
    <property type="entry name" value="Rel_fac_2"/>
    <property type="match status" value="1"/>
</dbReference>
<dbReference type="InterPro" id="IPR005139">
    <property type="entry name" value="PCRF"/>
</dbReference>
<dbReference type="InterPro" id="IPR000352">
    <property type="entry name" value="Pep_chain_release_fac_I"/>
</dbReference>
<dbReference type="InterPro" id="IPR045853">
    <property type="entry name" value="Pep_chain_release_fac_I_sf"/>
</dbReference>
<dbReference type="InterPro" id="IPR004374">
    <property type="entry name" value="PrfB"/>
</dbReference>
<dbReference type="NCBIfam" id="TIGR00020">
    <property type="entry name" value="prfB"/>
    <property type="match status" value="1"/>
</dbReference>
<dbReference type="PANTHER" id="PTHR43116:SF3">
    <property type="entry name" value="CLASS I PEPTIDE CHAIN RELEASE FACTOR"/>
    <property type="match status" value="1"/>
</dbReference>
<dbReference type="PANTHER" id="PTHR43116">
    <property type="entry name" value="PEPTIDE CHAIN RELEASE FACTOR 2"/>
    <property type="match status" value="1"/>
</dbReference>
<dbReference type="Pfam" id="PF03462">
    <property type="entry name" value="PCRF"/>
    <property type="match status" value="1"/>
</dbReference>
<dbReference type="Pfam" id="PF00472">
    <property type="entry name" value="RF-1"/>
    <property type="match status" value="1"/>
</dbReference>
<dbReference type="SMART" id="SM00937">
    <property type="entry name" value="PCRF"/>
    <property type="match status" value="1"/>
</dbReference>
<dbReference type="SUPFAM" id="SSF75620">
    <property type="entry name" value="Release factor"/>
    <property type="match status" value="1"/>
</dbReference>
<dbReference type="PROSITE" id="PS00745">
    <property type="entry name" value="RF_PROK_I"/>
    <property type="match status" value="1"/>
</dbReference>
<protein>
    <recommendedName>
        <fullName evidence="2">Peptide chain release factor 2</fullName>
        <shortName evidence="2">RF-2</shortName>
    </recommendedName>
</protein>
<proteinExistence type="inferred from homology"/>
<gene>
    <name evidence="2" type="primary">prfB</name>
    <name type="ordered locus">SAS0719</name>
</gene>
<reference key="1">
    <citation type="journal article" date="2004" name="Proc. Natl. Acad. Sci. U.S.A.">
        <title>Complete genomes of two clinical Staphylococcus aureus strains: evidence for the rapid evolution of virulence and drug resistance.</title>
        <authorList>
            <person name="Holden M.T.G."/>
            <person name="Feil E.J."/>
            <person name="Lindsay J.A."/>
            <person name="Peacock S.J."/>
            <person name="Day N.P.J."/>
            <person name="Enright M.C."/>
            <person name="Foster T.J."/>
            <person name="Moore C.E."/>
            <person name="Hurst L."/>
            <person name="Atkin R."/>
            <person name="Barron A."/>
            <person name="Bason N."/>
            <person name="Bentley S.D."/>
            <person name="Chillingworth C."/>
            <person name="Chillingworth T."/>
            <person name="Churcher C."/>
            <person name="Clark L."/>
            <person name="Corton C."/>
            <person name="Cronin A."/>
            <person name="Doggett J."/>
            <person name="Dowd L."/>
            <person name="Feltwell T."/>
            <person name="Hance Z."/>
            <person name="Harris B."/>
            <person name="Hauser H."/>
            <person name="Holroyd S."/>
            <person name="Jagels K."/>
            <person name="James K.D."/>
            <person name="Lennard N."/>
            <person name="Line A."/>
            <person name="Mayes R."/>
            <person name="Moule S."/>
            <person name="Mungall K."/>
            <person name="Ormond D."/>
            <person name="Quail M.A."/>
            <person name="Rabbinowitsch E."/>
            <person name="Rutherford K.M."/>
            <person name="Sanders M."/>
            <person name="Sharp S."/>
            <person name="Simmonds M."/>
            <person name="Stevens K."/>
            <person name="Whitehead S."/>
            <person name="Barrell B.G."/>
            <person name="Spratt B.G."/>
            <person name="Parkhill J."/>
        </authorList>
    </citation>
    <scope>NUCLEOTIDE SEQUENCE [LARGE SCALE GENOMIC DNA]</scope>
    <source>
        <strain>MSSA476</strain>
    </source>
</reference>
<comment type="function">
    <text evidence="2">Peptide chain release factor 2 directs the termination of translation in response to the peptide chain termination codons UGA and UAA.</text>
</comment>
<comment type="subcellular location">
    <subcellularLocation>
        <location evidence="2">Cytoplasm</location>
    </subcellularLocation>
</comment>
<comment type="PTM">
    <text evidence="2">Methylated by PrmC. Methylation increases the termination efficiency of RF2.</text>
</comment>
<comment type="miscellaneous">
    <text evidence="1">The gene for this protein contains a UGA in-frame termination codon after Leu-24; a naturally occurring frameshift enables complete translation of RF-2. This provides a mechanism for the protein to regulate its own production (By similarity).</text>
</comment>
<comment type="similarity">
    <text evidence="2">Belongs to the prokaryotic/mitochondrial release factor family.</text>
</comment>